<name>ATPA_CLOPS</name>
<accession>Q0SQZ3</accession>
<sequence>MHIKPEEITSIIKNEIKNYEKELETVDSGTIIQIGDGVARVYGLEECMEGELLEFPNQVFGMALNLEQDNVGCVLLGSEEGIKEGDIVKRTGKIVEVPVGEDLIGRVVNSLGQPIDGKGPIKNDGYRAIEVPAPGILERSSVNEPLQTGIKAIDSMIPIGRGQRELIIGDRQTGKTAIAIDTIINQKGKDVICIYVAIGQKQSTVANIVNTLTEEGAMDYSIVVTASASESAPLQYIAPYSGCTMGEYFMNKGKHVLIIYDDLSKHAVAYRTMSLLIRRPPGREAYPGDVFYIHSRLLERAAKLSKENGGGSLTALPIIETLAGDVTAYIPTNVISITDGQIFLETELFNAGQRPAVNPGISVSRVGGNAQIKAMKQVSGTLRLELAQYRELASFAQFGSDLDKDTQARLEKGKRLIEILKQDQYKPMAVEKQIMIIYAAVNNFLLDIKVSDIKKFEKEFLEYMDTHHREIGKAILDKKVLDDELKSALESAIVEFKKIFLM</sequence>
<protein>
    <recommendedName>
        <fullName evidence="1">ATP synthase subunit alpha</fullName>
        <ecNumber evidence="1">7.1.2.2</ecNumber>
    </recommendedName>
    <alternativeName>
        <fullName evidence="1">ATP synthase F1 sector subunit alpha</fullName>
    </alternativeName>
    <alternativeName>
        <fullName evidence="1">F-ATPase subunit alpha</fullName>
    </alternativeName>
</protein>
<comment type="function">
    <text evidence="1">Produces ATP from ADP in the presence of a proton gradient across the membrane. The alpha chain is a regulatory subunit.</text>
</comment>
<comment type="catalytic activity">
    <reaction evidence="1">
        <text>ATP + H2O + 4 H(+)(in) = ADP + phosphate + 5 H(+)(out)</text>
        <dbReference type="Rhea" id="RHEA:57720"/>
        <dbReference type="ChEBI" id="CHEBI:15377"/>
        <dbReference type="ChEBI" id="CHEBI:15378"/>
        <dbReference type="ChEBI" id="CHEBI:30616"/>
        <dbReference type="ChEBI" id="CHEBI:43474"/>
        <dbReference type="ChEBI" id="CHEBI:456216"/>
        <dbReference type="EC" id="7.1.2.2"/>
    </reaction>
</comment>
<comment type="subunit">
    <text evidence="1">F-type ATPases have 2 components, CF(1) - the catalytic core - and CF(0) - the membrane proton channel. CF(1) has five subunits: alpha(3), beta(3), gamma(1), delta(1), epsilon(1). CF(0) has three main subunits: a(1), b(2) and c(9-12). The alpha and beta chains form an alternating ring which encloses part of the gamma chain. CF(1) is attached to CF(0) by a central stalk formed by the gamma and epsilon chains, while a peripheral stalk is formed by the delta and b chains.</text>
</comment>
<comment type="subcellular location">
    <subcellularLocation>
        <location evidence="1">Cell membrane</location>
        <topology evidence="1">Peripheral membrane protein</topology>
    </subcellularLocation>
</comment>
<comment type="similarity">
    <text evidence="1">Belongs to the ATPase alpha/beta chains family.</text>
</comment>
<organism>
    <name type="scientific">Clostridium perfringens (strain SM101 / Type A)</name>
    <dbReference type="NCBI Taxonomy" id="289380"/>
    <lineage>
        <taxon>Bacteria</taxon>
        <taxon>Bacillati</taxon>
        <taxon>Bacillota</taxon>
        <taxon>Clostridia</taxon>
        <taxon>Eubacteriales</taxon>
        <taxon>Clostridiaceae</taxon>
        <taxon>Clostridium</taxon>
    </lineage>
</organism>
<keyword id="KW-0066">ATP synthesis</keyword>
<keyword id="KW-0067">ATP-binding</keyword>
<keyword id="KW-1003">Cell membrane</keyword>
<keyword id="KW-0139">CF(1)</keyword>
<keyword id="KW-0375">Hydrogen ion transport</keyword>
<keyword id="KW-0406">Ion transport</keyword>
<keyword id="KW-0472">Membrane</keyword>
<keyword id="KW-0547">Nucleotide-binding</keyword>
<keyword id="KW-1278">Translocase</keyword>
<keyword id="KW-0813">Transport</keyword>
<dbReference type="EC" id="7.1.2.2" evidence="1"/>
<dbReference type="EMBL" id="CP000312">
    <property type="protein sequence ID" value="ABG85567.1"/>
    <property type="molecule type" value="Genomic_DNA"/>
</dbReference>
<dbReference type="RefSeq" id="WP_011592983.1">
    <property type="nucleotide sequence ID" value="NC_008262.1"/>
</dbReference>
<dbReference type="SMR" id="Q0SQZ3"/>
<dbReference type="KEGG" id="cpr:CPR_2164"/>
<dbReference type="Proteomes" id="UP000001824">
    <property type="component" value="Chromosome"/>
</dbReference>
<dbReference type="GO" id="GO:0005886">
    <property type="term" value="C:plasma membrane"/>
    <property type="evidence" value="ECO:0007669"/>
    <property type="project" value="UniProtKB-SubCell"/>
</dbReference>
<dbReference type="GO" id="GO:0045259">
    <property type="term" value="C:proton-transporting ATP synthase complex"/>
    <property type="evidence" value="ECO:0007669"/>
    <property type="project" value="UniProtKB-KW"/>
</dbReference>
<dbReference type="GO" id="GO:0043531">
    <property type="term" value="F:ADP binding"/>
    <property type="evidence" value="ECO:0007669"/>
    <property type="project" value="TreeGrafter"/>
</dbReference>
<dbReference type="GO" id="GO:0005524">
    <property type="term" value="F:ATP binding"/>
    <property type="evidence" value="ECO:0007669"/>
    <property type="project" value="UniProtKB-UniRule"/>
</dbReference>
<dbReference type="GO" id="GO:0046933">
    <property type="term" value="F:proton-transporting ATP synthase activity, rotational mechanism"/>
    <property type="evidence" value="ECO:0007669"/>
    <property type="project" value="UniProtKB-UniRule"/>
</dbReference>
<dbReference type="CDD" id="cd18113">
    <property type="entry name" value="ATP-synt_F1_alpha_C"/>
    <property type="match status" value="1"/>
</dbReference>
<dbReference type="CDD" id="cd18116">
    <property type="entry name" value="ATP-synt_F1_alpha_N"/>
    <property type="match status" value="1"/>
</dbReference>
<dbReference type="CDD" id="cd01132">
    <property type="entry name" value="F1-ATPase_alpha_CD"/>
    <property type="match status" value="1"/>
</dbReference>
<dbReference type="FunFam" id="1.20.150.20:FF:000001">
    <property type="entry name" value="ATP synthase subunit alpha"/>
    <property type="match status" value="1"/>
</dbReference>
<dbReference type="FunFam" id="2.40.30.20:FF:000001">
    <property type="entry name" value="ATP synthase subunit alpha"/>
    <property type="match status" value="1"/>
</dbReference>
<dbReference type="FunFam" id="3.40.50.300:FF:000002">
    <property type="entry name" value="ATP synthase subunit alpha"/>
    <property type="match status" value="1"/>
</dbReference>
<dbReference type="Gene3D" id="2.40.30.20">
    <property type="match status" value="1"/>
</dbReference>
<dbReference type="Gene3D" id="1.20.150.20">
    <property type="entry name" value="ATP synthase alpha/beta chain, C-terminal domain"/>
    <property type="match status" value="1"/>
</dbReference>
<dbReference type="Gene3D" id="3.40.50.300">
    <property type="entry name" value="P-loop containing nucleotide triphosphate hydrolases"/>
    <property type="match status" value="1"/>
</dbReference>
<dbReference type="HAMAP" id="MF_01346">
    <property type="entry name" value="ATP_synth_alpha_bact"/>
    <property type="match status" value="1"/>
</dbReference>
<dbReference type="InterPro" id="IPR023366">
    <property type="entry name" value="ATP_synth_asu-like_sf"/>
</dbReference>
<dbReference type="InterPro" id="IPR000793">
    <property type="entry name" value="ATP_synth_asu_C"/>
</dbReference>
<dbReference type="InterPro" id="IPR038376">
    <property type="entry name" value="ATP_synth_asu_C_sf"/>
</dbReference>
<dbReference type="InterPro" id="IPR033732">
    <property type="entry name" value="ATP_synth_F1_a_nt-bd_dom"/>
</dbReference>
<dbReference type="InterPro" id="IPR005294">
    <property type="entry name" value="ATP_synth_F1_asu"/>
</dbReference>
<dbReference type="InterPro" id="IPR020003">
    <property type="entry name" value="ATPase_a/bsu_AS"/>
</dbReference>
<dbReference type="InterPro" id="IPR004100">
    <property type="entry name" value="ATPase_F1/V1/A1_a/bsu_N"/>
</dbReference>
<dbReference type="InterPro" id="IPR036121">
    <property type="entry name" value="ATPase_F1/V1/A1_a/bsu_N_sf"/>
</dbReference>
<dbReference type="InterPro" id="IPR000194">
    <property type="entry name" value="ATPase_F1/V1/A1_a/bsu_nucl-bd"/>
</dbReference>
<dbReference type="InterPro" id="IPR027417">
    <property type="entry name" value="P-loop_NTPase"/>
</dbReference>
<dbReference type="NCBIfam" id="TIGR00962">
    <property type="entry name" value="atpA"/>
    <property type="match status" value="1"/>
</dbReference>
<dbReference type="NCBIfam" id="NF009884">
    <property type="entry name" value="PRK13343.1"/>
    <property type="match status" value="1"/>
</dbReference>
<dbReference type="PANTHER" id="PTHR48082">
    <property type="entry name" value="ATP SYNTHASE SUBUNIT ALPHA, MITOCHONDRIAL"/>
    <property type="match status" value="1"/>
</dbReference>
<dbReference type="PANTHER" id="PTHR48082:SF2">
    <property type="entry name" value="ATP SYNTHASE SUBUNIT ALPHA, MITOCHONDRIAL"/>
    <property type="match status" value="1"/>
</dbReference>
<dbReference type="Pfam" id="PF00006">
    <property type="entry name" value="ATP-synt_ab"/>
    <property type="match status" value="1"/>
</dbReference>
<dbReference type="Pfam" id="PF00306">
    <property type="entry name" value="ATP-synt_ab_C"/>
    <property type="match status" value="1"/>
</dbReference>
<dbReference type="Pfam" id="PF02874">
    <property type="entry name" value="ATP-synt_ab_N"/>
    <property type="match status" value="1"/>
</dbReference>
<dbReference type="PIRSF" id="PIRSF039088">
    <property type="entry name" value="F_ATPase_subunit_alpha"/>
    <property type="match status" value="1"/>
</dbReference>
<dbReference type="SUPFAM" id="SSF47917">
    <property type="entry name" value="C-terminal domain of alpha and beta subunits of F1 ATP synthase"/>
    <property type="match status" value="1"/>
</dbReference>
<dbReference type="SUPFAM" id="SSF50615">
    <property type="entry name" value="N-terminal domain of alpha and beta subunits of F1 ATP synthase"/>
    <property type="match status" value="1"/>
</dbReference>
<dbReference type="SUPFAM" id="SSF52540">
    <property type="entry name" value="P-loop containing nucleoside triphosphate hydrolases"/>
    <property type="match status" value="1"/>
</dbReference>
<dbReference type="PROSITE" id="PS00152">
    <property type="entry name" value="ATPASE_ALPHA_BETA"/>
    <property type="match status" value="1"/>
</dbReference>
<feature type="chain" id="PRO_0000302640" description="ATP synthase subunit alpha">
    <location>
        <begin position="1"/>
        <end position="502"/>
    </location>
</feature>
<feature type="binding site" evidence="1">
    <location>
        <begin position="169"/>
        <end position="176"/>
    </location>
    <ligand>
        <name>ATP</name>
        <dbReference type="ChEBI" id="CHEBI:30616"/>
    </ligand>
</feature>
<feature type="site" description="Required for activity" evidence="1">
    <location>
        <position position="362"/>
    </location>
</feature>
<gene>
    <name evidence="1" type="primary">atpA</name>
    <name type="ordered locus">CPR_2164</name>
</gene>
<evidence type="ECO:0000255" key="1">
    <source>
        <dbReference type="HAMAP-Rule" id="MF_01346"/>
    </source>
</evidence>
<proteinExistence type="inferred from homology"/>
<reference key="1">
    <citation type="journal article" date="2006" name="Genome Res.">
        <title>Skewed genomic variability in strains of the toxigenic bacterial pathogen, Clostridium perfringens.</title>
        <authorList>
            <person name="Myers G.S.A."/>
            <person name="Rasko D.A."/>
            <person name="Cheung J.K."/>
            <person name="Ravel J."/>
            <person name="Seshadri R."/>
            <person name="DeBoy R.T."/>
            <person name="Ren Q."/>
            <person name="Varga J."/>
            <person name="Awad M.M."/>
            <person name="Brinkac L.M."/>
            <person name="Daugherty S.C."/>
            <person name="Haft D.H."/>
            <person name="Dodson R.J."/>
            <person name="Madupu R."/>
            <person name="Nelson W.C."/>
            <person name="Rosovitz M.J."/>
            <person name="Sullivan S.A."/>
            <person name="Khouri H."/>
            <person name="Dimitrov G.I."/>
            <person name="Watkins K.L."/>
            <person name="Mulligan S."/>
            <person name="Benton J."/>
            <person name="Radune D."/>
            <person name="Fisher D.J."/>
            <person name="Atkins H.S."/>
            <person name="Hiscox T."/>
            <person name="Jost B.H."/>
            <person name="Billington S.J."/>
            <person name="Songer J.G."/>
            <person name="McClane B.A."/>
            <person name="Titball R.W."/>
            <person name="Rood J.I."/>
            <person name="Melville S.B."/>
            <person name="Paulsen I.T."/>
        </authorList>
    </citation>
    <scope>NUCLEOTIDE SEQUENCE [LARGE SCALE GENOMIC DNA]</scope>
    <source>
        <strain>SM101 / Type A</strain>
    </source>
</reference>